<name>TRMD_MYCGA</name>
<proteinExistence type="inferred from homology"/>
<organism>
    <name type="scientific">Mycoplasmoides gallisepticum (strain R(low / passage 15 / clone 2))</name>
    <name type="common">Mycoplasma gallisepticum</name>
    <dbReference type="NCBI Taxonomy" id="710127"/>
    <lineage>
        <taxon>Bacteria</taxon>
        <taxon>Bacillati</taxon>
        <taxon>Mycoplasmatota</taxon>
        <taxon>Mycoplasmoidales</taxon>
        <taxon>Mycoplasmoidaceae</taxon>
        <taxon>Mycoplasmoides</taxon>
    </lineage>
</organism>
<feature type="chain" id="PRO_0000060411" description="tRNA (guanine-N(1)-)-methyltransferase">
    <location>
        <begin position="1"/>
        <end position="234"/>
    </location>
</feature>
<feature type="binding site" evidence="1">
    <location>
        <position position="117"/>
    </location>
    <ligand>
        <name>S-adenosyl-L-methionine</name>
        <dbReference type="ChEBI" id="CHEBI:59789"/>
    </ligand>
</feature>
<feature type="binding site" evidence="1">
    <location>
        <begin position="136"/>
        <end position="141"/>
    </location>
    <ligand>
        <name>S-adenosyl-L-methionine</name>
        <dbReference type="ChEBI" id="CHEBI:59789"/>
    </ligand>
</feature>
<feature type="sequence conflict" description="In Ref. 1; AAF19036." evidence="2" ref="1">
    <original>K</original>
    <variation>R</variation>
    <location>
        <position position="23"/>
    </location>
</feature>
<feature type="sequence conflict" description="In Ref. 1; AAF19036." evidence="2" ref="1">
    <original>P</original>
    <variation>S</variation>
    <location>
        <position position="82"/>
    </location>
</feature>
<feature type="sequence conflict" description="In Ref. 1; AAF19036." evidence="2" ref="1">
    <original>L</original>
    <variation>I</variation>
    <location>
        <position position="233"/>
    </location>
</feature>
<dbReference type="EC" id="2.1.1.228"/>
<dbReference type="EMBL" id="L35043">
    <property type="protein sequence ID" value="AAF19036.1"/>
    <property type="molecule type" value="Genomic_DNA"/>
</dbReference>
<dbReference type="EMBL" id="AE015450">
    <property type="protein sequence ID" value="AAP56975.1"/>
    <property type="molecule type" value="Genomic_DNA"/>
</dbReference>
<dbReference type="RefSeq" id="WP_011113884.1">
    <property type="nucleotide sequence ID" value="NC_004829.2"/>
</dbReference>
<dbReference type="SMR" id="Q9RDV3"/>
<dbReference type="KEGG" id="mga:MGA_0439"/>
<dbReference type="PATRIC" id="fig|233150.7.peg.702"/>
<dbReference type="HOGENOM" id="CLU_047363_0_1_14"/>
<dbReference type="OrthoDB" id="9807416at2"/>
<dbReference type="Proteomes" id="UP000001418">
    <property type="component" value="Chromosome"/>
</dbReference>
<dbReference type="GO" id="GO:0005829">
    <property type="term" value="C:cytosol"/>
    <property type="evidence" value="ECO:0007669"/>
    <property type="project" value="TreeGrafter"/>
</dbReference>
<dbReference type="GO" id="GO:0052906">
    <property type="term" value="F:tRNA (guanine(37)-N1)-methyltransferase activity"/>
    <property type="evidence" value="ECO:0007669"/>
    <property type="project" value="UniProtKB-UniRule"/>
</dbReference>
<dbReference type="GO" id="GO:0002939">
    <property type="term" value="P:tRNA N1-guanine methylation"/>
    <property type="evidence" value="ECO:0007669"/>
    <property type="project" value="TreeGrafter"/>
</dbReference>
<dbReference type="CDD" id="cd18080">
    <property type="entry name" value="TrmD-like"/>
    <property type="match status" value="1"/>
</dbReference>
<dbReference type="Gene3D" id="3.40.1280.10">
    <property type="match status" value="1"/>
</dbReference>
<dbReference type="Gene3D" id="1.10.1270.20">
    <property type="entry name" value="tRNA(m1g37)methyltransferase, domain 2"/>
    <property type="match status" value="1"/>
</dbReference>
<dbReference type="HAMAP" id="MF_00605">
    <property type="entry name" value="TrmD"/>
    <property type="match status" value="1"/>
</dbReference>
<dbReference type="InterPro" id="IPR029028">
    <property type="entry name" value="Alpha/beta_knot_MTases"/>
</dbReference>
<dbReference type="InterPro" id="IPR023148">
    <property type="entry name" value="tRNA_m1G_MeTrfase_C_sf"/>
</dbReference>
<dbReference type="InterPro" id="IPR002649">
    <property type="entry name" value="tRNA_m1G_MeTrfase_TrmD"/>
</dbReference>
<dbReference type="InterPro" id="IPR029026">
    <property type="entry name" value="tRNA_m1G_MTases_N"/>
</dbReference>
<dbReference type="InterPro" id="IPR016009">
    <property type="entry name" value="tRNA_MeTrfase_TRMD/TRM10"/>
</dbReference>
<dbReference type="NCBIfam" id="NF000648">
    <property type="entry name" value="PRK00026.1"/>
    <property type="match status" value="1"/>
</dbReference>
<dbReference type="NCBIfam" id="TIGR00088">
    <property type="entry name" value="trmD"/>
    <property type="match status" value="1"/>
</dbReference>
<dbReference type="PANTHER" id="PTHR46417">
    <property type="entry name" value="TRNA (GUANINE-N(1)-)-METHYLTRANSFERASE"/>
    <property type="match status" value="1"/>
</dbReference>
<dbReference type="PANTHER" id="PTHR46417:SF1">
    <property type="entry name" value="TRNA (GUANINE-N(1)-)-METHYLTRANSFERASE"/>
    <property type="match status" value="1"/>
</dbReference>
<dbReference type="Pfam" id="PF01746">
    <property type="entry name" value="tRNA_m1G_MT"/>
    <property type="match status" value="1"/>
</dbReference>
<dbReference type="PIRSF" id="PIRSF000386">
    <property type="entry name" value="tRNA_mtase"/>
    <property type="match status" value="1"/>
</dbReference>
<dbReference type="SUPFAM" id="SSF75217">
    <property type="entry name" value="alpha/beta knot"/>
    <property type="match status" value="1"/>
</dbReference>
<keyword id="KW-0963">Cytoplasm</keyword>
<keyword id="KW-0489">Methyltransferase</keyword>
<keyword id="KW-1185">Reference proteome</keyword>
<keyword id="KW-0949">S-adenosyl-L-methionine</keyword>
<keyword id="KW-0808">Transferase</keyword>
<keyword id="KW-0819">tRNA processing</keyword>
<gene>
    <name type="primary">trmD</name>
    <name type="ordered locus">MYCGA6250</name>
    <name type="ORF">MGA_0439</name>
</gene>
<reference key="1">
    <citation type="journal article" date="2002" name="FEMS Microbiol. Lett.">
        <title>Mycoplasma gallisepticum rpoA gene cluster.</title>
        <authorList>
            <person name="Skamrov A.V."/>
            <person name="Feoktistova E.S."/>
            <person name="Gol'dman M.A."/>
            <person name="Bibilashvili R.S."/>
        </authorList>
    </citation>
    <scope>NUCLEOTIDE SEQUENCE [GENOMIC DNA]</scope>
    <source>
        <strain>A5969Var.B</strain>
    </source>
</reference>
<reference key="2">
    <citation type="journal article" date="2003" name="Microbiology">
        <title>The complete genome sequence of the avian pathogen Mycoplasma gallisepticum strain R(low).</title>
        <authorList>
            <person name="Papazisi L."/>
            <person name="Gorton T.S."/>
            <person name="Kutish G."/>
            <person name="Markham P.F."/>
            <person name="Browning G.F."/>
            <person name="Nguyen D.K."/>
            <person name="Swartzell S."/>
            <person name="Madan A."/>
            <person name="Mahairas G."/>
            <person name="Geary S.J."/>
        </authorList>
    </citation>
    <scope>NUCLEOTIDE SEQUENCE [LARGE SCALE GENOMIC DNA]</scope>
    <source>
        <strain>R(low / passage 15 / clone 2)</strain>
    </source>
</reference>
<accession>Q9RDV3</accession>
<comment type="function">
    <text evidence="1">Specifically methylates guanosine-37 in various tRNAs.</text>
</comment>
<comment type="catalytic activity">
    <reaction>
        <text>guanosine(37) in tRNA + S-adenosyl-L-methionine = N(1)-methylguanosine(37) in tRNA + S-adenosyl-L-homocysteine + H(+)</text>
        <dbReference type="Rhea" id="RHEA:36899"/>
        <dbReference type="Rhea" id="RHEA-COMP:10145"/>
        <dbReference type="Rhea" id="RHEA-COMP:10147"/>
        <dbReference type="ChEBI" id="CHEBI:15378"/>
        <dbReference type="ChEBI" id="CHEBI:57856"/>
        <dbReference type="ChEBI" id="CHEBI:59789"/>
        <dbReference type="ChEBI" id="CHEBI:73542"/>
        <dbReference type="ChEBI" id="CHEBI:74269"/>
        <dbReference type="EC" id="2.1.1.228"/>
    </reaction>
</comment>
<comment type="subunit">
    <text evidence="1">Homodimer.</text>
</comment>
<comment type="subcellular location">
    <subcellularLocation>
        <location evidence="2">Cytoplasm</location>
    </subcellularLocation>
</comment>
<comment type="similarity">
    <text evidence="2">Belongs to the RNA methyltransferase TrmD family.</text>
</comment>
<evidence type="ECO:0000250" key="1"/>
<evidence type="ECO:0000305" key="2"/>
<protein>
    <recommendedName>
        <fullName>tRNA (guanine-N(1)-)-methyltransferase</fullName>
        <ecNumber>2.1.1.228</ecNumber>
    </recommendedName>
    <alternativeName>
        <fullName>M1G-methyltransferase</fullName>
    </alternativeName>
    <alternativeName>
        <fullName>tRNA [GM37] methyltransferase</fullName>
    </alternativeName>
</protein>
<sequence length="234" mass="26682">MKIVVLTLFDDFVRSYYDFSIIKNALDKKAVELEVINFRQYANDKHKTVDDTIYGGSAGMLLKLEPLVNCLRDIKQNQFKDPNKIRTYLLSPQGEVYDQNKAVALSQSDHDLILIAGRYEGFDERIYHYVDGALSVGDFVITGGELAALIVVDSIVRLLPNVINKDSLSSESFNNYLLDYPMYTKPYDFEGYKVPDVLLSGNHQAIAAFNQQEAINNTKMKRPDLYLKYKSNLK</sequence>